<organism>
    <name type="scientific">Staphylococcus aureus (strain MW2)</name>
    <dbReference type="NCBI Taxonomy" id="196620"/>
    <lineage>
        <taxon>Bacteria</taxon>
        <taxon>Bacillati</taxon>
        <taxon>Bacillota</taxon>
        <taxon>Bacilli</taxon>
        <taxon>Bacillales</taxon>
        <taxon>Staphylococcaceae</taxon>
        <taxon>Staphylococcus</taxon>
    </lineage>
</organism>
<dbReference type="EMBL" id="BA000033">
    <property type="status" value="NOT_ANNOTATED_CDS"/>
    <property type="molecule type" value="Genomic_DNA"/>
</dbReference>
<dbReference type="EMBL" id="BK006301">
    <property type="protein sequence ID" value="DAA06125.1"/>
    <property type="molecule type" value="Genomic_DNA"/>
</dbReference>
<dbReference type="SMR" id="A9JX08"/>
<dbReference type="GO" id="GO:0031640">
    <property type="term" value="P:killing of cells of another organism"/>
    <property type="evidence" value="ECO:0007669"/>
    <property type="project" value="UniProtKB-KW"/>
</dbReference>
<dbReference type="InterPro" id="IPR031429">
    <property type="entry name" value="PSM_alpha"/>
</dbReference>
<dbReference type="Pfam" id="PF17063">
    <property type="entry name" value="PSMalpha"/>
    <property type="match status" value="1"/>
</dbReference>
<keyword id="KW-0204">Cytolysis</keyword>
<keyword id="KW-0903">Direct protein sequencing</keyword>
<keyword id="KW-0291">Formylation</keyword>
<keyword id="KW-0843">Virulence</keyword>
<name>PSMA4_STAAW</name>
<comment type="function">
    <text evidence="1">Peptide which can recruit, activate and subsequently lyse human neutrophils, thus eliminating the main cellular defense against infection. Stimulates the secretion of the chemotactic factor interleukin-8 (IL-8). The ensuing activation process triggers an inflammatory response in the host, thus contributing greatly to virulence. Also possesses hemolytic activity, which may contribute to the development of disease.</text>
</comment>
<comment type="induction">
    <text evidence="1">Up-regulated by agr.</text>
</comment>
<comment type="miscellaneous">
    <text>Peptide production is higher in most prevalent community-associated MRSA strains than in hospital-associated MRSA strains.</text>
</comment>
<comment type="similarity">
    <text evidence="2">Belongs to the phenol-soluble modulin alpha peptides family.</text>
</comment>
<evidence type="ECO:0000269" key="1">
    <source>
    </source>
</evidence>
<evidence type="ECO:0000305" key="2"/>
<reference key="1">
    <citation type="journal article" date="2002" name="Lancet">
        <title>Genome and virulence determinants of high virulence community-acquired MRSA.</title>
        <authorList>
            <person name="Baba T."/>
            <person name="Takeuchi F."/>
            <person name="Kuroda M."/>
            <person name="Yuzawa H."/>
            <person name="Aoki K."/>
            <person name="Oguchi A."/>
            <person name="Nagai Y."/>
            <person name="Iwama N."/>
            <person name="Asano K."/>
            <person name="Naimi T."/>
            <person name="Kuroda H."/>
            <person name="Cui L."/>
            <person name="Yamamoto K."/>
            <person name="Hiramatsu K."/>
        </authorList>
    </citation>
    <scope>NUCLEOTIDE SEQUENCE [LARGE SCALE GENOMIC DNA]</scope>
    <source>
        <strain>MW2</strain>
    </source>
</reference>
<reference key="2">
    <citation type="journal article" date="2007" name="Nat. Med.">
        <title>Identification of novel cytolytic peptides as key virulence determinants for community-associated MRSA.</title>
        <authorList>
            <person name="Wang R."/>
            <person name="Braughton K.R."/>
            <person name="Kretschmer D."/>
            <person name="Bach T.-H.L."/>
            <person name="Queck S.Y."/>
            <person name="Li M."/>
            <person name="Kennedy A.D."/>
            <person name="Dorward D.W."/>
            <person name="Klebanoff S.J."/>
            <person name="Peschel A."/>
            <person name="DeLeo F.R."/>
            <person name="Otto M."/>
        </authorList>
    </citation>
    <scope>PARTIAL PROTEIN SEQUENCE</scope>
    <scope>FORMYLATION AT MET-1</scope>
    <scope>FUNCTION AS A VIRULENCE FACTOR</scope>
    <scope>IDENTIFICATION BY MASS SPECTROMETRY</scope>
    <scope>INDUCTION BY AGR</scope>
</reference>
<feature type="peptide" id="PRO_0000345084" description="Phenol-soluble modulin alpha 4 peptide">
    <location>
        <begin position="1"/>
        <end position="20"/>
    </location>
</feature>
<feature type="modified residue" description="N-formylmethionine" evidence="1">
    <location>
        <position position="1"/>
    </location>
</feature>
<sequence length="20" mass="2172">MAIVGTIIKIIKAIIDIFAK</sequence>
<protein>
    <recommendedName>
        <fullName>Phenol-soluble modulin alpha 4 peptide</fullName>
    </recommendedName>
</protein>
<gene>
    <name type="primary">psmA4</name>
    <name type="ordered locus">MW0406.1</name>
</gene>
<accession>A9JX08</accession>
<proteinExistence type="evidence at protein level"/>